<keyword id="KW-0067">ATP-binding</keyword>
<keyword id="KW-0963">Cytoplasm</keyword>
<keyword id="KW-0547">Nucleotide-binding</keyword>
<keyword id="KW-1185">Reference proteome</keyword>
<keyword id="KW-0694">RNA-binding</keyword>
<keyword id="KW-0784">Thiamine biosynthesis</keyword>
<keyword id="KW-0808">Transferase</keyword>
<keyword id="KW-0820">tRNA-binding</keyword>
<dbReference type="EC" id="2.8.1.4" evidence="1"/>
<dbReference type="EMBL" id="AP006618">
    <property type="protein sequence ID" value="BAD56870.1"/>
    <property type="molecule type" value="Genomic_DNA"/>
</dbReference>
<dbReference type="RefSeq" id="WP_011208555.1">
    <property type="nucleotide sequence ID" value="NC_006361.1"/>
</dbReference>
<dbReference type="SMR" id="Q5YY71"/>
<dbReference type="STRING" id="247156.NFA_20240"/>
<dbReference type="GeneID" id="61132803"/>
<dbReference type="KEGG" id="nfa:NFA_20240"/>
<dbReference type="eggNOG" id="COG0301">
    <property type="taxonomic scope" value="Bacteria"/>
</dbReference>
<dbReference type="HOGENOM" id="CLU_037952_4_0_11"/>
<dbReference type="OrthoDB" id="9773948at2"/>
<dbReference type="UniPathway" id="UPA00060"/>
<dbReference type="Proteomes" id="UP000006820">
    <property type="component" value="Chromosome"/>
</dbReference>
<dbReference type="GO" id="GO:0005829">
    <property type="term" value="C:cytosol"/>
    <property type="evidence" value="ECO:0007669"/>
    <property type="project" value="TreeGrafter"/>
</dbReference>
<dbReference type="GO" id="GO:0005524">
    <property type="term" value="F:ATP binding"/>
    <property type="evidence" value="ECO:0007669"/>
    <property type="project" value="UniProtKB-UniRule"/>
</dbReference>
<dbReference type="GO" id="GO:0004810">
    <property type="term" value="F:CCA tRNA nucleotidyltransferase activity"/>
    <property type="evidence" value="ECO:0007669"/>
    <property type="project" value="InterPro"/>
</dbReference>
<dbReference type="GO" id="GO:0000049">
    <property type="term" value="F:tRNA binding"/>
    <property type="evidence" value="ECO:0007669"/>
    <property type="project" value="UniProtKB-UniRule"/>
</dbReference>
<dbReference type="GO" id="GO:0140741">
    <property type="term" value="F:tRNA-uracil-4 sulfurtransferase activity"/>
    <property type="evidence" value="ECO:0007669"/>
    <property type="project" value="UniProtKB-EC"/>
</dbReference>
<dbReference type="GO" id="GO:0009228">
    <property type="term" value="P:thiamine biosynthetic process"/>
    <property type="evidence" value="ECO:0007669"/>
    <property type="project" value="UniProtKB-KW"/>
</dbReference>
<dbReference type="GO" id="GO:0009229">
    <property type="term" value="P:thiamine diphosphate biosynthetic process"/>
    <property type="evidence" value="ECO:0007669"/>
    <property type="project" value="UniProtKB-UniRule"/>
</dbReference>
<dbReference type="GO" id="GO:0052837">
    <property type="term" value="P:thiazole biosynthetic process"/>
    <property type="evidence" value="ECO:0007669"/>
    <property type="project" value="TreeGrafter"/>
</dbReference>
<dbReference type="GO" id="GO:0002937">
    <property type="term" value="P:tRNA 4-thiouridine biosynthesis"/>
    <property type="evidence" value="ECO:0007669"/>
    <property type="project" value="TreeGrafter"/>
</dbReference>
<dbReference type="CDD" id="cd01712">
    <property type="entry name" value="PPase_ThiI"/>
    <property type="match status" value="1"/>
</dbReference>
<dbReference type="CDD" id="cd11716">
    <property type="entry name" value="THUMP_ThiI"/>
    <property type="match status" value="1"/>
</dbReference>
<dbReference type="FunFam" id="3.40.50.620:FF:000053">
    <property type="entry name" value="Probable tRNA sulfurtransferase"/>
    <property type="match status" value="1"/>
</dbReference>
<dbReference type="Gene3D" id="3.30.2130.30">
    <property type="match status" value="1"/>
</dbReference>
<dbReference type="Gene3D" id="3.40.50.620">
    <property type="entry name" value="HUPs"/>
    <property type="match status" value="1"/>
</dbReference>
<dbReference type="HAMAP" id="MF_00021">
    <property type="entry name" value="ThiI"/>
    <property type="match status" value="1"/>
</dbReference>
<dbReference type="InterPro" id="IPR014729">
    <property type="entry name" value="Rossmann-like_a/b/a_fold"/>
</dbReference>
<dbReference type="InterPro" id="IPR020536">
    <property type="entry name" value="ThiI_AANH"/>
</dbReference>
<dbReference type="InterPro" id="IPR054173">
    <property type="entry name" value="ThiI_fer"/>
</dbReference>
<dbReference type="InterPro" id="IPR049961">
    <property type="entry name" value="ThiI_N"/>
</dbReference>
<dbReference type="InterPro" id="IPR004114">
    <property type="entry name" value="THUMP_dom"/>
</dbReference>
<dbReference type="InterPro" id="IPR049962">
    <property type="entry name" value="THUMP_ThiI"/>
</dbReference>
<dbReference type="InterPro" id="IPR003720">
    <property type="entry name" value="tRNA_STrfase"/>
</dbReference>
<dbReference type="InterPro" id="IPR050102">
    <property type="entry name" value="tRNA_sulfurtransferase_ThiI"/>
</dbReference>
<dbReference type="NCBIfam" id="TIGR00342">
    <property type="entry name" value="tRNA uracil 4-sulfurtransferase ThiI"/>
    <property type="match status" value="1"/>
</dbReference>
<dbReference type="PANTHER" id="PTHR43209">
    <property type="entry name" value="TRNA SULFURTRANSFERASE"/>
    <property type="match status" value="1"/>
</dbReference>
<dbReference type="PANTHER" id="PTHR43209:SF1">
    <property type="entry name" value="TRNA SULFURTRANSFERASE"/>
    <property type="match status" value="1"/>
</dbReference>
<dbReference type="Pfam" id="PF02568">
    <property type="entry name" value="ThiI"/>
    <property type="match status" value="1"/>
</dbReference>
<dbReference type="Pfam" id="PF22025">
    <property type="entry name" value="ThiI_fer"/>
    <property type="match status" value="1"/>
</dbReference>
<dbReference type="Pfam" id="PF02926">
    <property type="entry name" value="THUMP"/>
    <property type="match status" value="1"/>
</dbReference>
<dbReference type="SMART" id="SM00981">
    <property type="entry name" value="THUMP"/>
    <property type="match status" value="1"/>
</dbReference>
<dbReference type="SUPFAM" id="SSF52402">
    <property type="entry name" value="Adenine nucleotide alpha hydrolases-like"/>
    <property type="match status" value="1"/>
</dbReference>
<dbReference type="SUPFAM" id="SSF143437">
    <property type="entry name" value="THUMP domain-like"/>
    <property type="match status" value="1"/>
</dbReference>
<dbReference type="PROSITE" id="PS51165">
    <property type="entry name" value="THUMP"/>
    <property type="match status" value="1"/>
</dbReference>
<proteinExistence type="inferred from homology"/>
<name>THII_NOCFA</name>
<comment type="function">
    <text evidence="1">Catalyzes the ATP-dependent transfer of a sulfur to tRNA to produce 4-thiouridine in position 8 of tRNAs, which functions as a near-UV photosensor. Also catalyzes the transfer of sulfur to the sulfur carrier protein ThiS, forming ThiS-thiocarboxylate. This is a step in the synthesis of thiazole, in the thiamine biosynthesis pathway. The sulfur is donated as persulfide by IscS.</text>
</comment>
<comment type="catalytic activity">
    <reaction evidence="1">
        <text>[ThiI sulfur-carrier protein]-S-sulfanyl-L-cysteine + a uridine in tRNA + 2 reduced [2Fe-2S]-[ferredoxin] + ATP + H(+) = [ThiI sulfur-carrier protein]-L-cysteine + a 4-thiouridine in tRNA + 2 oxidized [2Fe-2S]-[ferredoxin] + AMP + diphosphate</text>
        <dbReference type="Rhea" id="RHEA:24176"/>
        <dbReference type="Rhea" id="RHEA-COMP:10000"/>
        <dbReference type="Rhea" id="RHEA-COMP:10001"/>
        <dbReference type="Rhea" id="RHEA-COMP:13337"/>
        <dbReference type="Rhea" id="RHEA-COMP:13338"/>
        <dbReference type="Rhea" id="RHEA-COMP:13339"/>
        <dbReference type="Rhea" id="RHEA-COMP:13340"/>
        <dbReference type="ChEBI" id="CHEBI:15378"/>
        <dbReference type="ChEBI" id="CHEBI:29950"/>
        <dbReference type="ChEBI" id="CHEBI:30616"/>
        <dbReference type="ChEBI" id="CHEBI:33019"/>
        <dbReference type="ChEBI" id="CHEBI:33737"/>
        <dbReference type="ChEBI" id="CHEBI:33738"/>
        <dbReference type="ChEBI" id="CHEBI:61963"/>
        <dbReference type="ChEBI" id="CHEBI:65315"/>
        <dbReference type="ChEBI" id="CHEBI:136798"/>
        <dbReference type="ChEBI" id="CHEBI:456215"/>
        <dbReference type="EC" id="2.8.1.4"/>
    </reaction>
</comment>
<comment type="catalytic activity">
    <reaction evidence="1">
        <text>[ThiS sulfur-carrier protein]-C-terminal Gly-Gly-AMP + S-sulfanyl-L-cysteinyl-[cysteine desulfurase] + AH2 = [ThiS sulfur-carrier protein]-C-terminal-Gly-aminoethanethioate + L-cysteinyl-[cysteine desulfurase] + A + AMP + 2 H(+)</text>
        <dbReference type="Rhea" id="RHEA:43340"/>
        <dbReference type="Rhea" id="RHEA-COMP:12157"/>
        <dbReference type="Rhea" id="RHEA-COMP:12158"/>
        <dbReference type="Rhea" id="RHEA-COMP:12910"/>
        <dbReference type="Rhea" id="RHEA-COMP:19908"/>
        <dbReference type="ChEBI" id="CHEBI:13193"/>
        <dbReference type="ChEBI" id="CHEBI:15378"/>
        <dbReference type="ChEBI" id="CHEBI:17499"/>
        <dbReference type="ChEBI" id="CHEBI:29950"/>
        <dbReference type="ChEBI" id="CHEBI:61963"/>
        <dbReference type="ChEBI" id="CHEBI:90618"/>
        <dbReference type="ChEBI" id="CHEBI:232372"/>
        <dbReference type="ChEBI" id="CHEBI:456215"/>
    </reaction>
</comment>
<comment type="pathway">
    <text evidence="1">Cofactor biosynthesis; thiamine diphosphate biosynthesis.</text>
</comment>
<comment type="subcellular location">
    <subcellularLocation>
        <location evidence="1">Cytoplasm</location>
    </subcellularLocation>
</comment>
<comment type="similarity">
    <text evidence="1">Belongs to the ThiI family.</text>
</comment>
<feature type="chain" id="PRO_1000074247" description="Probable tRNA sulfurtransferase">
    <location>
        <begin position="1"/>
        <end position="410"/>
    </location>
</feature>
<feature type="domain" description="THUMP" evidence="1">
    <location>
        <begin position="58"/>
        <end position="167"/>
    </location>
</feature>
<feature type="binding site" evidence="1">
    <location>
        <begin position="185"/>
        <end position="186"/>
    </location>
    <ligand>
        <name>ATP</name>
        <dbReference type="ChEBI" id="CHEBI:30616"/>
    </ligand>
</feature>
<feature type="binding site" evidence="1">
    <location>
        <begin position="210"/>
        <end position="211"/>
    </location>
    <ligand>
        <name>ATP</name>
        <dbReference type="ChEBI" id="CHEBI:30616"/>
    </ligand>
</feature>
<feature type="binding site" evidence="1">
    <location>
        <position position="267"/>
    </location>
    <ligand>
        <name>ATP</name>
        <dbReference type="ChEBI" id="CHEBI:30616"/>
    </ligand>
</feature>
<feature type="binding site" evidence="1">
    <location>
        <position position="289"/>
    </location>
    <ligand>
        <name>ATP</name>
        <dbReference type="ChEBI" id="CHEBI:30616"/>
    </ligand>
</feature>
<feature type="binding site" evidence="1">
    <location>
        <position position="298"/>
    </location>
    <ligand>
        <name>ATP</name>
        <dbReference type="ChEBI" id="CHEBI:30616"/>
    </ligand>
</feature>
<gene>
    <name evidence="1" type="primary">thiI</name>
    <name type="ordered locus">NFA_20240</name>
</gene>
<reference key="1">
    <citation type="journal article" date="2004" name="Proc. Natl. Acad. Sci. U.S.A.">
        <title>The complete genomic sequence of Nocardia farcinica IFM 10152.</title>
        <authorList>
            <person name="Ishikawa J."/>
            <person name="Yamashita A."/>
            <person name="Mikami Y."/>
            <person name="Hoshino Y."/>
            <person name="Kurita H."/>
            <person name="Hotta K."/>
            <person name="Shiba T."/>
            <person name="Hattori M."/>
        </authorList>
    </citation>
    <scope>NUCLEOTIDE SEQUENCE [LARGE SCALE GENOMIC DNA]</scope>
    <source>
        <strain>IFM 10152</strain>
    </source>
</reference>
<accession>Q5YY71</accession>
<evidence type="ECO:0000255" key="1">
    <source>
        <dbReference type="HAMAP-Rule" id="MF_00021"/>
    </source>
</evidence>
<organism>
    <name type="scientific">Nocardia farcinica (strain IFM 10152)</name>
    <dbReference type="NCBI Taxonomy" id="247156"/>
    <lineage>
        <taxon>Bacteria</taxon>
        <taxon>Bacillati</taxon>
        <taxon>Actinomycetota</taxon>
        <taxon>Actinomycetes</taxon>
        <taxon>Mycobacteriales</taxon>
        <taxon>Nocardiaceae</taxon>
        <taxon>Nocardia</taxon>
    </lineage>
</organism>
<protein>
    <recommendedName>
        <fullName evidence="1">Probable tRNA sulfurtransferase</fullName>
        <ecNumber evidence="1">2.8.1.4</ecNumber>
    </recommendedName>
    <alternativeName>
        <fullName evidence="1">Sulfur carrier protein ThiS sulfurtransferase</fullName>
    </alternativeName>
    <alternativeName>
        <fullName evidence="1">Thiamine biosynthesis protein ThiI</fullName>
    </alternativeName>
    <alternativeName>
        <fullName evidence="1">tRNA 4-thiouridine synthase</fullName>
    </alternativeName>
</protein>
<sequence>MSGFCVLAKYGEIAVKGRNQGWFENCLVRNLRHAVGGPVLIRRRGGFLVASAHHRDPAELTRRLQEVMGLNVVQPALSVPPTVEDATAAAVDLLRRRHAERPGAPVPTFAVRARRRWKDFPMSSDAFAAHIGARVCAELGWRVDLAAPEVPVLVEVDRREIFVSVERLPGQGGLPVGCSGRALVLLSGGYDSPVAAYRAMRRGLHCDFVHFTGAPYTDPSSMYKAYALARELGRYQTPARLYVVPVGNAQKTLATAGAEELQIVARRRLYLRIAEELARRRQRDALVTGDSLGQVASQTLSNLVSADQACTLPVLRPLIGWDKQEIITEARRIGTAEISVLRDEDCCSLLAPSEVATRTNPADLRVIEQRADIDTLVEQALEHVTVLTPGRVRGAEPPRAKVARPTVVAG</sequence>